<organism>
    <name type="scientific">Rhizobium rhizogenes (strain K84 / ATCC BAA-868)</name>
    <name type="common">Agrobacterium radiobacter</name>
    <dbReference type="NCBI Taxonomy" id="311403"/>
    <lineage>
        <taxon>Bacteria</taxon>
        <taxon>Pseudomonadati</taxon>
        <taxon>Pseudomonadota</taxon>
        <taxon>Alphaproteobacteria</taxon>
        <taxon>Hyphomicrobiales</taxon>
        <taxon>Rhizobiaceae</taxon>
        <taxon>Rhizobium/Agrobacterium group</taxon>
        <taxon>Rhizobium</taxon>
    </lineage>
</organism>
<accession>B9JG45</accession>
<reference key="1">
    <citation type="journal article" date="2009" name="J. Bacteriol.">
        <title>Genome sequences of three Agrobacterium biovars help elucidate the evolution of multichromosome genomes in bacteria.</title>
        <authorList>
            <person name="Slater S.C."/>
            <person name="Goldman B.S."/>
            <person name="Goodner B."/>
            <person name="Setubal J.C."/>
            <person name="Farrand S.K."/>
            <person name="Nester E.W."/>
            <person name="Burr T.J."/>
            <person name="Banta L."/>
            <person name="Dickerman A.W."/>
            <person name="Paulsen I."/>
            <person name="Otten L."/>
            <person name="Suen G."/>
            <person name="Welch R."/>
            <person name="Almeida N.F."/>
            <person name="Arnold F."/>
            <person name="Burton O.T."/>
            <person name="Du Z."/>
            <person name="Ewing A."/>
            <person name="Godsy E."/>
            <person name="Heisel S."/>
            <person name="Houmiel K.L."/>
            <person name="Jhaveri J."/>
            <person name="Lu J."/>
            <person name="Miller N.M."/>
            <person name="Norton S."/>
            <person name="Chen Q."/>
            <person name="Phoolcharoen W."/>
            <person name="Ohlin V."/>
            <person name="Ondrusek D."/>
            <person name="Pride N."/>
            <person name="Stricklin S.L."/>
            <person name="Sun J."/>
            <person name="Wheeler C."/>
            <person name="Wilson L."/>
            <person name="Zhu H."/>
            <person name="Wood D.W."/>
        </authorList>
    </citation>
    <scope>NUCLEOTIDE SEQUENCE [LARGE SCALE GENOMIC DNA]</scope>
    <source>
        <strain>K84 / ATCC BAA-868</strain>
    </source>
</reference>
<name>ACCD_RHIR8</name>
<evidence type="ECO:0000255" key="1">
    <source>
        <dbReference type="HAMAP-Rule" id="MF_01395"/>
    </source>
</evidence>
<evidence type="ECO:0000255" key="2">
    <source>
        <dbReference type="PROSITE-ProRule" id="PRU01136"/>
    </source>
</evidence>
<proteinExistence type="inferred from homology"/>
<sequence>MNWITNYVRPRINSMLGRREVPENLWIKCPETGEMVFHKDLEDNKWVIPASGFHMKMPAKARLADLFDKGEYEALQQPKVAQDPLKFRDSKKYTDRLKDSRVKTDQEDTIVAGVGKVRGLKLVAVVHEFNFMGGSLGIAAGEAIVKAFERAIAEKCPLVMFPASGGARMQEGILSLMQLPRTTVAVDMLKEAGQPYIVVLTNPTTGGVTASYAMLGDVHLAEPGAEICFAGKRVIEQTIREKLPEGFQTSEYLLEHGMVDMVVKRHDIPDTLATLLKILTKAPANDVSAKSLNGAAAPLVANG</sequence>
<feature type="chain" id="PRO_0000389661" description="Acetyl-coenzyme A carboxylase carboxyl transferase subunit beta">
    <location>
        <begin position="1"/>
        <end position="303"/>
    </location>
</feature>
<feature type="domain" description="CoA carboxyltransferase N-terminal" evidence="2">
    <location>
        <begin position="25"/>
        <end position="294"/>
    </location>
</feature>
<comment type="function">
    <text evidence="1">Component of the acetyl coenzyme A carboxylase (ACC) complex. Biotin carboxylase (BC) catalyzes the carboxylation of biotin on its carrier protein (BCCP) and then the CO(2) group is transferred by the transcarboxylase to acetyl-CoA to form malonyl-CoA.</text>
</comment>
<comment type="catalytic activity">
    <reaction evidence="1">
        <text>N(6)-carboxybiotinyl-L-lysyl-[protein] + acetyl-CoA = N(6)-biotinyl-L-lysyl-[protein] + malonyl-CoA</text>
        <dbReference type="Rhea" id="RHEA:54728"/>
        <dbReference type="Rhea" id="RHEA-COMP:10505"/>
        <dbReference type="Rhea" id="RHEA-COMP:10506"/>
        <dbReference type="ChEBI" id="CHEBI:57288"/>
        <dbReference type="ChEBI" id="CHEBI:57384"/>
        <dbReference type="ChEBI" id="CHEBI:83144"/>
        <dbReference type="ChEBI" id="CHEBI:83145"/>
        <dbReference type="EC" id="2.1.3.15"/>
    </reaction>
</comment>
<comment type="pathway">
    <text evidence="1">Lipid metabolism; malonyl-CoA biosynthesis; malonyl-CoA from acetyl-CoA: step 1/1.</text>
</comment>
<comment type="subunit">
    <text evidence="1">Acetyl-CoA carboxylase is a heterohexamer composed of biotin carboxyl carrier protein (AccB), biotin carboxylase (AccC) and two subunits each of ACCase subunit alpha (AccA) and ACCase subunit beta (AccD).</text>
</comment>
<comment type="subcellular location">
    <subcellularLocation>
        <location evidence="1">Cytoplasm</location>
    </subcellularLocation>
</comment>
<comment type="similarity">
    <text evidence="1">Belongs to the AccD/PCCB family.</text>
</comment>
<dbReference type="EC" id="2.1.3.15" evidence="1"/>
<dbReference type="EMBL" id="CP000628">
    <property type="protein sequence ID" value="ACM24828.1"/>
    <property type="molecule type" value="Genomic_DNA"/>
</dbReference>
<dbReference type="RefSeq" id="WP_007698612.1">
    <property type="nucleotide sequence ID" value="NC_011985.1"/>
</dbReference>
<dbReference type="SMR" id="B9JG45"/>
<dbReference type="STRING" id="311403.Arad_0030"/>
<dbReference type="GeneID" id="86850431"/>
<dbReference type="KEGG" id="ara:Arad_0030"/>
<dbReference type="eggNOG" id="COG0777">
    <property type="taxonomic scope" value="Bacteria"/>
</dbReference>
<dbReference type="HOGENOM" id="CLU_015486_1_0_5"/>
<dbReference type="UniPathway" id="UPA00655">
    <property type="reaction ID" value="UER00711"/>
</dbReference>
<dbReference type="Proteomes" id="UP000001600">
    <property type="component" value="Chromosome 1"/>
</dbReference>
<dbReference type="GO" id="GO:0009329">
    <property type="term" value="C:acetate CoA-transferase complex"/>
    <property type="evidence" value="ECO:0007669"/>
    <property type="project" value="TreeGrafter"/>
</dbReference>
<dbReference type="GO" id="GO:0003989">
    <property type="term" value="F:acetyl-CoA carboxylase activity"/>
    <property type="evidence" value="ECO:0007669"/>
    <property type="project" value="InterPro"/>
</dbReference>
<dbReference type="GO" id="GO:0005524">
    <property type="term" value="F:ATP binding"/>
    <property type="evidence" value="ECO:0007669"/>
    <property type="project" value="UniProtKB-KW"/>
</dbReference>
<dbReference type="GO" id="GO:0016743">
    <property type="term" value="F:carboxyl- or carbamoyltransferase activity"/>
    <property type="evidence" value="ECO:0007669"/>
    <property type="project" value="UniProtKB-UniRule"/>
</dbReference>
<dbReference type="GO" id="GO:0006633">
    <property type="term" value="P:fatty acid biosynthetic process"/>
    <property type="evidence" value="ECO:0007669"/>
    <property type="project" value="UniProtKB-KW"/>
</dbReference>
<dbReference type="GO" id="GO:2001295">
    <property type="term" value="P:malonyl-CoA biosynthetic process"/>
    <property type="evidence" value="ECO:0007669"/>
    <property type="project" value="UniProtKB-UniRule"/>
</dbReference>
<dbReference type="Gene3D" id="3.90.226.10">
    <property type="entry name" value="2-enoyl-CoA Hydratase, Chain A, domain 1"/>
    <property type="match status" value="1"/>
</dbReference>
<dbReference type="HAMAP" id="MF_01395">
    <property type="entry name" value="AcetylCoA_CT_beta"/>
    <property type="match status" value="1"/>
</dbReference>
<dbReference type="InterPro" id="IPR034733">
    <property type="entry name" value="AcCoA_carboxyl_beta"/>
</dbReference>
<dbReference type="InterPro" id="IPR000438">
    <property type="entry name" value="Acetyl_CoA_COase_Trfase_b_su"/>
</dbReference>
<dbReference type="InterPro" id="IPR029045">
    <property type="entry name" value="ClpP/crotonase-like_dom_sf"/>
</dbReference>
<dbReference type="InterPro" id="IPR011762">
    <property type="entry name" value="COA_CT_N"/>
</dbReference>
<dbReference type="NCBIfam" id="TIGR00515">
    <property type="entry name" value="accD"/>
    <property type="match status" value="1"/>
</dbReference>
<dbReference type="PANTHER" id="PTHR42995">
    <property type="entry name" value="ACETYL-COENZYME A CARBOXYLASE CARBOXYL TRANSFERASE SUBUNIT BETA, CHLOROPLASTIC"/>
    <property type="match status" value="1"/>
</dbReference>
<dbReference type="PANTHER" id="PTHR42995:SF5">
    <property type="entry name" value="ACETYL-COENZYME A CARBOXYLASE CARBOXYL TRANSFERASE SUBUNIT BETA, CHLOROPLASTIC"/>
    <property type="match status" value="1"/>
</dbReference>
<dbReference type="Pfam" id="PF01039">
    <property type="entry name" value="Carboxyl_trans"/>
    <property type="match status" value="1"/>
</dbReference>
<dbReference type="PRINTS" id="PR01070">
    <property type="entry name" value="ACCCTRFRASEB"/>
</dbReference>
<dbReference type="SUPFAM" id="SSF52096">
    <property type="entry name" value="ClpP/crotonase"/>
    <property type="match status" value="1"/>
</dbReference>
<dbReference type="PROSITE" id="PS50980">
    <property type="entry name" value="COA_CT_NTER"/>
    <property type="match status" value="1"/>
</dbReference>
<protein>
    <recommendedName>
        <fullName evidence="1">Acetyl-coenzyme A carboxylase carboxyl transferase subunit beta</fullName>
        <shortName evidence="1">ACCase subunit beta</shortName>
        <shortName evidence="1">Acetyl-CoA carboxylase carboxyltransferase subunit beta</shortName>
        <ecNumber evidence="1">2.1.3.15</ecNumber>
    </recommendedName>
</protein>
<keyword id="KW-0067">ATP-binding</keyword>
<keyword id="KW-0963">Cytoplasm</keyword>
<keyword id="KW-0275">Fatty acid biosynthesis</keyword>
<keyword id="KW-0276">Fatty acid metabolism</keyword>
<keyword id="KW-0444">Lipid biosynthesis</keyword>
<keyword id="KW-0443">Lipid metabolism</keyword>
<keyword id="KW-0547">Nucleotide-binding</keyword>
<keyword id="KW-0808">Transferase</keyword>
<gene>
    <name evidence="1" type="primary">accD</name>
    <name type="ordered locus">Arad_0030</name>
</gene>